<dbReference type="EC" id="2.7.7.68" evidence="1"/>
<dbReference type="EMBL" id="CP001901">
    <property type="protein sequence ID" value="ADC69948.1"/>
    <property type="molecule type" value="Genomic_DNA"/>
</dbReference>
<dbReference type="RefSeq" id="WP_012980856.1">
    <property type="nucleotide sequence ID" value="NC_013887.1"/>
</dbReference>
<dbReference type="SMR" id="D3S534"/>
<dbReference type="STRING" id="644281.MFS40622_1271"/>
<dbReference type="GeneID" id="8805130"/>
<dbReference type="KEGG" id="mfs:MFS40622_1271"/>
<dbReference type="eggNOG" id="arCOG04472">
    <property type="taxonomic scope" value="Archaea"/>
</dbReference>
<dbReference type="HOGENOM" id="CLU_076569_2_0_2"/>
<dbReference type="OrthoDB" id="11179at2157"/>
<dbReference type="UniPathway" id="UPA00071"/>
<dbReference type="Proteomes" id="UP000002189">
    <property type="component" value="Chromosome"/>
</dbReference>
<dbReference type="GO" id="GO:0005525">
    <property type="term" value="F:GTP binding"/>
    <property type="evidence" value="ECO:0007669"/>
    <property type="project" value="UniProtKB-KW"/>
</dbReference>
<dbReference type="GO" id="GO:0043814">
    <property type="term" value="F:phospholactate guanylyltransferase activity"/>
    <property type="evidence" value="ECO:0007669"/>
    <property type="project" value="UniProtKB-EC"/>
</dbReference>
<dbReference type="GO" id="GO:0052645">
    <property type="term" value="P:F420-0 metabolic process"/>
    <property type="evidence" value="ECO:0007669"/>
    <property type="project" value="UniProtKB-UniRule"/>
</dbReference>
<dbReference type="Gene3D" id="3.90.550.10">
    <property type="entry name" value="Spore Coat Polysaccharide Biosynthesis Protein SpsA, Chain A"/>
    <property type="match status" value="1"/>
</dbReference>
<dbReference type="HAMAP" id="MF_02114">
    <property type="entry name" value="CofC"/>
    <property type="match status" value="1"/>
</dbReference>
<dbReference type="InterPro" id="IPR002835">
    <property type="entry name" value="CofC"/>
</dbReference>
<dbReference type="InterPro" id="IPR029044">
    <property type="entry name" value="Nucleotide-diphossugar_trans"/>
</dbReference>
<dbReference type="NCBIfam" id="TIGR03552">
    <property type="entry name" value="F420_cofC"/>
    <property type="match status" value="1"/>
</dbReference>
<dbReference type="PANTHER" id="PTHR40392">
    <property type="entry name" value="2-PHOSPHO-L-LACTATE GUANYLYLTRANSFERASE"/>
    <property type="match status" value="1"/>
</dbReference>
<dbReference type="PANTHER" id="PTHR40392:SF1">
    <property type="entry name" value="2-PHOSPHO-L-LACTATE GUANYLYLTRANSFERASE"/>
    <property type="match status" value="1"/>
</dbReference>
<dbReference type="Pfam" id="PF01983">
    <property type="entry name" value="CofC"/>
    <property type="match status" value="1"/>
</dbReference>
<dbReference type="SUPFAM" id="SSF53448">
    <property type="entry name" value="Nucleotide-diphospho-sugar transferases"/>
    <property type="match status" value="1"/>
</dbReference>
<accession>D3S534</accession>
<gene>
    <name evidence="1" type="primary">cofC</name>
    <name type="ordered locus">MFS40622_1271</name>
</gene>
<keyword id="KW-0342">GTP-binding</keyword>
<keyword id="KW-0547">Nucleotide-binding</keyword>
<keyword id="KW-0548">Nucleotidyltransferase</keyword>
<keyword id="KW-0808">Transferase</keyword>
<sequence>MKVLIPVSPINSLKTRLSEFLSSEERKNLLLNMLRDINKALEGLDVVIISRDEEILEFGKNELKAETIKEKYKGLNKAIKQAFEEIEDDEVIIIPADIPLIKKRHIEDILKLSKDYDVIIAPSRGGGTNLLYLKSKNLIEIKYEGFSFLKHLEEAKKKNLRYYIYDSFLISVDINTPEDLGEIFIHGDSTYTKNYLKGLGIEVESKHSSAGRFVVKRGGDNEVSNPM</sequence>
<reference key="1">
    <citation type="submission" date="2010-02" db="EMBL/GenBank/DDBJ databases">
        <title>Complete sequence of chromosome of Methanocaldococcus sp. FS406-22.</title>
        <authorList>
            <consortium name="US DOE Joint Genome Institute"/>
            <person name="Lucas S."/>
            <person name="Copeland A."/>
            <person name="Lapidus A."/>
            <person name="Cheng J.-F."/>
            <person name="Bruce D."/>
            <person name="Goodwin L."/>
            <person name="Pitluck S."/>
            <person name="Teshima H."/>
            <person name="Detter J.C."/>
            <person name="Han C."/>
            <person name="Tapia R."/>
            <person name="Larimer F."/>
            <person name="Land M."/>
            <person name="Hauser L."/>
            <person name="Kyrpides N."/>
            <person name="Mikhailova N."/>
            <person name="Sieprawska-Lupa M."/>
            <person name="Leigh J."/>
            <person name="Whitman W.B."/>
            <person name="Woyke T."/>
        </authorList>
    </citation>
    <scope>NUCLEOTIDE SEQUENCE [LARGE SCALE GENOMIC DNA]</scope>
    <source>
        <strain>FS406-22</strain>
    </source>
</reference>
<evidence type="ECO:0000255" key="1">
    <source>
        <dbReference type="HAMAP-Rule" id="MF_02114"/>
    </source>
</evidence>
<name>COFC_METSF</name>
<organism>
    <name type="scientific">Methanocaldococcus sp. (strain FS406-22)</name>
    <dbReference type="NCBI Taxonomy" id="644281"/>
    <lineage>
        <taxon>Archaea</taxon>
        <taxon>Methanobacteriati</taxon>
        <taxon>Methanobacteriota</taxon>
        <taxon>Methanomada group</taxon>
        <taxon>Methanococci</taxon>
        <taxon>Methanococcales</taxon>
        <taxon>Methanocaldococcaceae</taxon>
        <taxon>Methanocaldococcus</taxon>
    </lineage>
</organism>
<proteinExistence type="inferred from homology"/>
<feature type="chain" id="PRO_0000398739" description="2-phospho-L-lactate guanylyltransferase">
    <location>
        <begin position="1"/>
        <end position="227"/>
    </location>
</feature>
<comment type="function">
    <text evidence="1">Guanylyltransferase that catalyzes the activation of (2S)-2-phospholactate (2-PL) as (2S)-lactyl-2-diphospho-5'-guanosine, via the condensation of 2-PL with GTP. It is involved in the biosynthesis of coenzyme F420, a hydride carrier cofactor.</text>
</comment>
<comment type="catalytic activity">
    <reaction evidence="1">
        <text>(2S)-2-phospholactate + GTP + H(+) = (2S)-lactyl-2-diphospho-5'-guanosine + diphosphate</text>
        <dbReference type="Rhea" id="RHEA:63424"/>
        <dbReference type="ChEBI" id="CHEBI:15378"/>
        <dbReference type="ChEBI" id="CHEBI:33019"/>
        <dbReference type="ChEBI" id="CHEBI:37565"/>
        <dbReference type="ChEBI" id="CHEBI:59435"/>
        <dbReference type="ChEBI" id="CHEBI:59906"/>
        <dbReference type="EC" id="2.7.7.68"/>
    </reaction>
</comment>
<comment type="pathway">
    <text evidence="1">Cofactor biosynthesis; coenzyme F420 biosynthesis.</text>
</comment>
<comment type="subunit">
    <text evidence="1">Homodimer.</text>
</comment>
<comment type="similarity">
    <text evidence="1">Belongs to the CofC family.</text>
</comment>
<protein>
    <recommendedName>
        <fullName evidence="1">2-phospho-L-lactate guanylyltransferase</fullName>
        <shortName evidence="1">LP guanylyltransferase</shortName>
        <ecNumber evidence="1">2.7.7.68</ecNumber>
    </recommendedName>
</protein>